<gene>
    <name evidence="1" type="primary">rbfA</name>
    <name type="ordered locus">Tola_2245</name>
</gene>
<evidence type="ECO:0000255" key="1">
    <source>
        <dbReference type="HAMAP-Rule" id="MF_00003"/>
    </source>
</evidence>
<feature type="chain" id="PRO_1000201656" description="Ribosome-binding factor A">
    <location>
        <begin position="1"/>
        <end position="134"/>
    </location>
</feature>
<dbReference type="EMBL" id="CP001616">
    <property type="protein sequence ID" value="ACQ93843.1"/>
    <property type="molecule type" value="Genomic_DNA"/>
</dbReference>
<dbReference type="RefSeq" id="WP_015879311.1">
    <property type="nucleotide sequence ID" value="NC_012691.1"/>
</dbReference>
<dbReference type="SMR" id="C4L8X3"/>
<dbReference type="STRING" id="595494.Tola_2245"/>
<dbReference type="KEGG" id="tau:Tola_2245"/>
<dbReference type="eggNOG" id="COG0858">
    <property type="taxonomic scope" value="Bacteria"/>
</dbReference>
<dbReference type="HOGENOM" id="CLU_089475_5_0_6"/>
<dbReference type="OrthoDB" id="307788at2"/>
<dbReference type="Proteomes" id="UP000009073">
    <property type="component" value="Chromosome"/>
</dbReference>
<dbReference type="GO" id="GO:0005829">
    <property type="term" value="C:cytosol"/>
    <property type="evidence" value="ECO:0007669"/>
    <property type="project" value="TreeGrafter"/>
</dbReference>
<dbReference type="GO" id="GO:0043024">
    <property type="term" value="F:ribosomal small subunit binding"/>
    <property type="evidence" value="ECO:0007669"/>
    <property type="project" value="TreeGrafter"/>
</dbReference>
<dbReference type="GO" id="GO:0030490">
    <property type="term" value="P:maturation of SSU-rRNA"/>
    <property type="evidence" value="ECO:0007669"/>
    <property type="project" value="UniProtKB-UniRule"/>
</dbReference>
<dbReference type="FunFam" id="3.30.300.20:FF:000007">
    <property type="entry name" value="Ribosome-binding factor A"/>
    <property type="match status" value="1"/>
</dbReference>
<dbReference type="Gene3D" id="3.30.300.20">
    <property type="match status" value="1"/>
</dbReference>
<dbReference type="HAMAP" id="MF_00003">
    <property type="entry name" value="RbfA"/>
    <property type="match status" value="1"/>
</dbReference>
<dbReference type="InterPro" id="IPR015946">
    <property type="entry name" value="KH_dom-like_a/b"/>
</dbReference>
<dbReference type="InterPro" id="IPR000238">
    <property type="entry name" value="RbfA"/>
</dbReference>
<dbReference type="InterPro" id="IPR023799">
    <property type="entry name" value="RbfA_dom_sf"/>
</dbReference>
<dbReference type="InterPro" id="IPR020053">
    <property type="entry name" value="Ribosome-bd_factorA_CS"/>
</dbReference>
<dbReference type="NCBIfam" id="TIGR00082">
    <property type="entry name" value="rbfA"/>
    <property type="match status" value="1"/>
</dbReference>
<dbReference type="PANTHER" id="PTHR33515">
    <property type="entry name" value="RIBOSOME-BINDING FACTOR A, CHLOROPLASTIC-RELATED"/>
    <property type="match status" value="1"/>
</dbReference>
<dbReference type="PANTHER" id="PTHR33515:SF1">
    <property type="entry name" value="RIBOSOME-BINDING FACTOR A, CHLOROPLASTIC-RELATED"/>
    <property type="match status" value="1"/>
</dbReference>
<dbReference type="Pfam" id="PF02033">
    <property type="entry name" value="RBFA"/>
    <property type="match status" value="1"/>
</dbReference>
<dbReference type="SUPFAM" id="SSF89919">
    <property type="entry name" value="Ribosome-binding factor A, RbfA"/>
    <property type="match status" value="1"/>
</dbReference>
<dbReference type="PROSITE" id="PS01319">
    <property type="entry name" value="RBFA"/>
    <property type="match status" value="1"/>
</dbReference>
<keyword id="KW-0963">Cytoplasm</keyword>
<keyword id="KW-1185">Reference proteome</keyword>
<keyword id="KW-0690">Ribosome biogenesis</keyword>
<sequence length="134" mass="15391">MAKEFGRADRVAQQIQREIAVILQREVKDPRVGMVTVSDVELTRDLQHAKIFVTFFLNEVDDIEAGVKVLNDASGYIRILMGKAMKLRVVPEIRFVYDKTLVEGMRISNLVTNTVRDDQLRRGESPDQNEEDRD</sequence>
<proteinExistence type="inferred from homology"/>
<name>RBFA_TOLAT</name>
<comment type="function">
    <text evidence="1">One of several proteins that assist in the late maturation steps of the functional core of the 30S ribosomal subunit. Associates with free 30S ribosomal subunits (but not with 30S subunits that are part of 70S ribosomes or polysomes). Required for efficient processing of 16S rRNA. May interact with the 5'-terminal helix region of 16S rRNA.</text>
</comment>
<comment type="subunit">
    <text evidence="1">Monomer. Binds 30S ribosomal subunits, but not 50S ribosomal subunits or 70S ribosomes.</text>
</comment>
<comment type="subcellular location">
    <subcellularLocation>
        <location evidence="1">Cytoplasm</location>
    </subcellularLocation>
</comment>
<comment type="similarity">
    <text evidence="1">Belongs to the RbfA family.</text>
</comment>
<accession>C4L8X3</accession>
<protein>
    <recommendedName>
        <fullName evidence="1">Ribosome-binding factor A</fullName>
    </recommendedName>
</protein>
<reference key="1">
    <citation type="submission" date="2009-05" db="EMBL/GenBank/DDBJ databases">
        <title>Complete sequence of Tolumonas auensis DSM 9187.</title>
        <authorList>
            <consortium name="US DOE Joint Genome Institute"/>
            <person name="Lucas S."/>
            <person name="Copeland A."/>
            <person name="Lapidus A."/>
            <person name="Glavina del Rio T."/>
            <person name="Tice H."/>
            <person name="Bruce D."/>
            <person name="Goodwin L."/>
            <person name="Pitluck S."/>
            <person name="Chertkov O."/>
            <person name="Brettin T."/>
            <person name="Detter J.C."/>
            <person name="Han C."/>
            <person name="Larimer F."/>
            <person name="Land M."/>
            <person name="Hauser L."/>
            <person name="Kyrpides N."/>
            <person name="Mikhailova N."/>
            <person name="Spring S."/>
            <person name="Beller H."/>
        </authorList>
    </citation>
    <scope>NUCLEOTIDE SEQUENCE [LARGE SCALE GENOMIC DNA]</scope>
    <source>
        <strain>DSM 9187 / NBRC 110442 / TA 4</strain>
    </source>
</reference>
<organism>
    <name type="scientific">Tolumonas auensis (strain DSM 9187 / NBRC 110442 / TA 4)</name>
    <dbReference type="NCBI Taxonomy" id="595494"/>
    <lineage>
        <taxon>Bacteria</taxon>
        <taxon>Pseudomonadati</taxon>
        <taxon>Pseudomonadota</taxon>
        <taxon>Gammaproteobacteria</taxon>
        <taxon>Aeromonadales</taxon>
        <taxon>Aeromonadaceae</taxon>
        <taxon>Tolumonas</taxon>
    </lineage>
</organism>